<keyword id="KW-0963">Cytoplasm</keyword>
<keyword id="KW-0221">Differentiation</keyword>
<keyword id="KW-1185">Reference proteome</keyword>
<keyword id="KW-0694">RNA-binding</keyword>
<keyword id="KW-0744">Spermatogenesis</keyword>
<feature type="chain" id="PRO_0000462293" description="Protein tumorous testis">
    <location>
        <begin position="1"/>
        <end position="230"/>
    </location>
</feature>
<feature type="domain" description="RRM" evidence="1">
    <location>
        <begin position="37"/>
        <end position="128"/>
    </location>
</feature>
<organism evidence="9">
    <name type="scientific">Drosophila melanogaster</name>
    <name type="common">Fruit fly</name>
    <dbReference type="NCBI Taxonomy" id="7227"/>
    <lineage>
        <taxon>Eukaryota</taxon>
        <taxon>Metazoa</taxon>
        <taxon>Ecdysozoa</taxon>
        <taxon>Arthropoda</taxon>
        <taxon>Hexapoda</taxon>
        <taxon>Insecta</taxon>
        <taxon>Pterygota</taxon>
        <taxon>Neoptera</taxon>
        <taxon>Endopterygota</taxon>
        <taxon>Diptera</taxon>
        <taxon>Brachycera</taxon>
        <taxon>Muscomorpha</taxon>
        <taxon>Ephydroidea</taxon>
        <taxon>Drosophilidae</taxon>
        <taxon>Drosophila</taxon>
        <taxon>Sophophora</taxon>
    </lineage>
</organism>
<protein>
    <recommendedName>
        <fullName evidence="5 8">Protein tumorous testis</fullName>
    </recommendedName>
</protein>
<proteinExistence type="evidence at protein level"/>
<comment type="function">
    <text evidence="2 3">RNA binding protein that forms a complex with bam and bgcn, involved in 3'UTR-dependent regulation of a subset of mRNAs (PubMed:25412508, PubMed:28190776). Preferentially binds a long isoform of mei-P26 transcripts (PubMed:25412508). Involved in 3'UTR-dependent post-transcriptional repression of several 3'-RNA processing factors (PubMed:25412508). Involved in promoting germline stem cell lineage differentiation and mitosis-to-meiosis transition (PubMed:25412508, PubMed:28190776). Required for proper transit amplification of spermatogonia (PubMed:25412508).</text>
</comment>
<comment type="subunit">
    <text evidence="2 3">Part of a complex composed of at least tut, bam and bgcn; complex formation does not require RNA (PubMed:25412508). Interacts with bam (via N-terminus); the interaction is direct (PubMed:25412508). Interacts with bgcn; the interaction is indirect and is mediated by bam (PubMed:25412508). As part of the bam-bgcn-tut complex associates with twin; may recruit the CCR4-NOT1 deadenylation complex to mRNA 3'UTRs to mediate post-transcriptional regulation of expression (PubMed:28190776).</text>
</comment>
<comment type="subcellular location">
    <subcellularLocation>
        <location evidence="2">Cytoplasm</location>
    </subcellularLocation>
</comment>
<comment type="domain">
    <text evidence="2">The RRM domain is required for binding mei-P26 mRNA 3'UTR.</text>
</comment>
<comment type="disruption phenotype">
    <text evidence="2 4">Viable but males are sterile (PubMed:25412508). Male germline cells are arrested at the transit amplifying stage and over-proliferate (PubMed:25412508). Males display reduced copulation behavior (PubMed:39317727).</text>
</comment>
<name>TUT_DROME</name>
<sequence length="230" mass="27131">MDFESKYCTSQVNGTITITTRKVLDENLKSLLDEGKGELFLSCIPRNHSCSPRWIVEVASELGEVYIMRYKIDFSGNSRGYAYLQYINVDLKESAMQYLPMRFRQLCMCLRVEPSTNNRELVLKNVESSLRPWQVYQEMLKIHPFTIVRVYEYQLDQFFYIFEYRNNDSAASAHQRVRNSIRKFGEHAHISWLTAENILSRASGSFCFQREVSQNRTRRVPPRQKGCFKF</sequence>
<dbReference type="EMBL" id="AE014296">
    <property type="protein sequence ID" value="AAN12017.1"/>
    <property type="molecule type" value="Genomic_DNA"/>
</dbReference>
<dbReference type="RefSeq" id="NP_729346.1">
    <property type="nucleotide sequence ID" value="NM_168261.3"/>
</dbReference>
<dbReference type="SMR" id="Q8IQA2"/>
<dbReference type="STRING" id="7227.FBpp0076443"/>
<dbReference type="PaxDb" id="7227-FBpp0076443"/>
<dbReference type="EnsemblMetazoa" id="FBtr0076720">
    <property type="protein sequence ID" value="FBpp0076443"/>
    <property type="gene ID" value="FBgn0052364"/>
</dbReference>
<dbReference type="GeneID" id="317996"/>
<dbReference type="KEGG" id="dme:Dmel_CG32364"/>
<dbReference type="UCSC" id="CG32364-RA">
    <property type="organism name" value="d. melanogaster"/>
</dbReference>
<dbReference type="AGR" id="FB:FBgn0052364"/>
<dbReference type="CTD" id="317996"/>
<dbReference type="FlyBase" id="FBgn0052364">
    <property type="gene designation" value="tut"/>
</dbReference>
<dbReference type="VEuPathDB" id="VectorBase:FBgn0052364"/>
<dbReference type="eggNOG" id="KOG0117">
    <property type="taxonomic scope" value="Eukaryota"/>
</dbReference>
<dbReference type="HOGENOM" id="CLU_078619_0_0_1"/>
<dbReference type="InParanoid" id="Q8IQA2"/>
<dbReference type="OMA" id="RYKIDFS"/>
<dbReference type="OrthoDB" id="3602734at2759"/>
<dbReference type="PhylomeDB" id="Q8IQA2"/>
<dbReference type="BioGRID-ORCS" id="317996">
    <property type="hits" value="0 hits in 1 CRISPR screen"/>
</dbReference>
<dbReference type="Proteomes" id="UP000000803">
    <property type="component" value="Chromosome 3L"/>
</dbReference>
<dbReference type="Bgee" id="FBgn0052364">
    <property type="expression patterns" value="Expressed in spermatocyte in testis and 48 other cell types or tissues"/>
</dbReference>
<dbReference type="ExpressionAtlas" id="Q8IQA2">
    <property type="expression patterns" value="baseline and differential"/>
</dbReference>
<dbReference type="GO" id="GO:0005737">
    <property type="term" value="C:cytoplasm"/>
    <property type="evidence" value="ECO:0000314"/>
    <property type="project" value="FlyBase"/>
</dbReference>
<dbReference type="GO" id="GO:0005634">
    <property type="term" value="C:nucleus"/>
    <property type="evidence" value="ECO:0000318"/>
    <property type="project" value="GO_Central"/>
</dbReference>
<dbReference type="GO" id="GO:1990904">
    <property type="term" value="C:ribonucleoprotein complex"/>
    <property type="evidence" value="ECO:0000318"/>
    <property type="project" value="GO_Central"/>
</dbReference>
<dbReference type="GO" id="GO:0003729">
    <property type="term" value="F:mRNA binding"/>
    <property type="evidence" value="ECO:0000318"/>
    <property type="project" value="GO_Central"/>
</dbReference>
<dbReference type="GO" id="GO:0003723">
    <property type="term" value="F:RNA binding"/>
    <property type="evidence" value="ECO:0000314"/>
    <property type="project" value="FlyBase"/>
</dbReference>
<dbReference type="GO" id="GO:0098730">
    <property type="term" value="P:male germline stem cell symmetric division"/>
    <property type="evidence" value="ECO:0000315"/>
    <property type="project" value="FlyBase"/>
</dbReference>
<dbReference type="GO" id="GO:0017148">
    <property type="term" value="P:negative regulation of translation"/>
    <property type="evidence" value="ECO:0000315"/>
    <property type="project" value="FlyBase"/>
</dbReference>
<dbReference type="CDD" id="cd12249">
    <property type="entry name" value="RRM1_hnRNPR_like"/>
    <property type="match status" value="1"/>
</dbReference>
<dbReference type="InterPro" id="IPR035979">
    <property type="entry name" value="RBD_domain_sf"/>
</dbReference>
<dbReference type="InterPro" id="IPR000504">
    <property type="entry name" value="RRM_dom"/>
</dbReference>
<dbReference type="SUPFAM" id="SSF54928">
    <property type="entry name" value="RNA-binding domain, RBD"/>
    <property type="match status" value="1"/>
</dbReference>
<dbReference type="PROSITE" id="PS50102">
    <property type="entry name" value="RRM"/>
    <property type="match status" value="1"/>
</dbReference>
<accession>Q8IQA2</accession>
<reference evidence="9" key="1">
    <citation type="journal article" date="2000" name="Science">
        <title>The genome sequence of Drosophila melanogaster.</title>
        <authorList>
            <person name="Adams M.D."/>
            <person name="Celniker S.E."/>
            <person name="Holt R.A."/>
            <person name="Evans C.A."/>
            <person name="Gocayne J.D."/>
            <person name="Amanatides P.G."/>
            <person name="Scherer S.E."/>
            <person name="Li P.W."/>
            <person name="Hoskins R.A."/>
            <person name="Galle R.F."/>
            <person name="George R.A."/>
            <person name="Lewis S.E."/>
            <person name="Richards S."/>
            <person name="Ashburner M."/>
            <person name="Henderson S.N."/>
            <person name="Sutton G.G."/>
            <person name="Wortman J.R."/>
            <person name="Yandell M.D."/>
            <person name="Zhang Q."/>
            <person name="Chen L.X."/>
            <person name="Brandon R.C."/>
            <person name="Rogers Y.-H.C."/>
            <person name="Blazej R.G."/>
            <person name="Champe M."/>
            <person name="Pfeiffer B.D."/>
            <person name="Wan K.H."/>
            <person name="Doyle C."/>
            <person name="Baxter E.G."/>
            <person name="Helt G."/>
            <person name="Nelson C.R."/>
            <person name="Miklos G.L.G."/>
            <person name="Abril J.F."/>
            <person name="Agbayani A."/>
            <person name="An H.-J."/>
            <person name="Andrews-Pfannkoch C."/>
            <person name="Baldwin D."/>
            <person name="Ballew R.M."/>
            <person name="Basu A."/>
            <person name="Baxendale J."/>
            <person name="Bayraktaroglu L."/>
            <person name="Beasley E.M."/>
            <person name="Beeson K.Y."/>
            <person name="Benos P.V."/>
            <person name="Berman B.P."/>
            <person name="Bhandari D."/>
            <person name="Bolshakov S."/>
            <person name="Borkova D."/>
            <person name="Botchan M.R."/>
            <person name="Bouck J."/>
            <person name="Brokstein P."/>
            <person name="Brottier P."/>
            <person name="Burtis K.C."/>
            <person name="Busam D.A."/>
            <person name="Butler H."/>
            <person name="Cadieu E."/>
            <person name="Center A."/>
            <person name="Chandra I."/>
            <person name="Cherry J.M."/>
            <person name="Cawley S."/>
            <person name="Dahlke C."/>
            <person name="Davenport L.B."/>
            <person name="Davies P."/>
            <person name="de Pablos B."/>
            <person name="Delcher A."/>
            <person name="Deng Z."/>
            <person name="Mays A.D."/>
            <person name="Dew I."/>
            <person name="Dietz S.M."/>
            <person name="Dodson K."/>
            <person name="Doup L.E."/>
            <person name="Downes M."/>
            <person name="Dugan-Rocha S."/>
            <person name="Dunkov B.C."/>
            <person name="Dunn P."/>
            <person name="Durbin K.J."/>
            <person name="Evangelista C.C."/>
            <person name="Ferraz C."/>
            <person name="Ferriera S."/>
            <person name="Fleischmann W."/>
            <person name="Fosler C."/>
            <person name="Gabrielian A.E."/>
            <person name="Garg N.S."/>
            <person name="Gelbart W.M."/>
            <person name="Glasser K."/>
            <person name="Glodek A."/>
            <person name="Gong F."/>
            <person name="Gorrell J.H."/>
            <person name="Gu Z."/>
            <person name="Guan P."/>
            <person name="Harris M."/>
            <person name="Harris N.L."/>
            <person name="Harvey D.A."/>
            <person name="Heiman T.J."/>
            <person name="Hernandez J.R."/>
            <person name="Houck J."/>
            <person name="Hostin D."/>
            <person name="Houston K.A."/>
            <person name="Howland T.J."/>
            <person name="Wei M.-H."/>
            <person name="Ibegwam C."/>
            <person name="Jalali M."/>
            <person name="Kalush F."/>
            <person name="Karpen G.H."/>
            <person name="Ke Z."/>
            <person name="Kennison J.A."/>
            <person name="Ketchum K.A."/>
            <person name="Kimmel B.E."/>
            <person name="Kodira C.D."/>
            <person name="Kraft C.L."/>
            <person name="Kravitz S."/>
            <person name="Kulp D."/>
            <person name="Lai Z."/>
            <person name="Lasko P."/>
            <person name="Lei Y."/>
            <person name="Levitsky A.A."/>
            <person name="Li J.H."/>
            <person name="Li Z."/>
            <person name="Liang Y."/>
            <person name="Lin X."/>
            <person name="Liu X."/>
            <person name="Mattei B."/>
            <person name="McIntosh T.C."/>
            <person name="McLeod M.P."/>
            <person name="McPherson D."/>
            <person name="Merkulov G."/>
            <person name="Milshina N.V."/>
            <person name="Mobarry C."/>
            <person name="Morris J."/>
            <person name="Moshrefi A."/>
            <person name="Mount S.M."/>
            <person name="Moy M."/>
            <person name="Murphy B."/>
            <person name="Murphy L."/>
            <person name="Muzny D.M."/>
            <person name="Nelson D.L."/>
            <person name="Nelson D.R."/>
            <person name="Nelson K.A."/>
            <person name="Nixon K."/>
            <person name="Nusskern D.R."/>
            <person name="Pacleb J.M."/>
            <person name="Palazzolo M."/>
            <person name="Pittman G.S."/>
            <person name="Pan S."/>
            <person name="Pollard J."/>
            <person name="Puri V."/>
            <person name="Reese M.G."/>
            <person name="Reinert K."/>
            <person name="Remington K."/>
            <person name="Saunders R.D.C."/>
            <person name="Scheeler F."/>
            <person name="Shen H."/>
            <person name="Shue B.C."/>
            <person name="Siden-Kiamos I."/>
            <person name="Simpson M."/>
            <person name="Skupski M.P."/>
            <person name="Smith T.J."/>
            <person name="Spier E."/>
            <person name="Spradling A.C."/>
            <person name="Stapleton M."/>
            <person name="Strong R."/>
            <person name="Sun E."/>
            <person name="Svirskas R."/>
            <person name="Tector C."/>
            <person name="Turner R."/>
            <person name="Venter E."/>
            <person name="Wang A.H."/>
            <person name="Wang X."/>
            <person name="Wang Z.-Y."/>
            <person name="Wassarman D.A."/>
            <person name="Weinstock G.M."/>
            <person name="Weissenbach J."/>
            <person name="Williams S.M."/>
            <person name="Woodage T."/>
            <person name="Worley K.C."/>
            <person name="Wu D."/>
            <person name="Yang S."/>
            <person name="Yao Q.A."/>
            <person name="Ye J."/>
            <person name="Yeh R.-F."/>
            <person name="Zaveri J.S."/>
            <person name="Zhan M."/>
            <person name="Zhang G."/>
            <person name="Zhao Q."/>
            <person name="Zheng L."/>
            <person name="Zheng X.H."/>
            <person name="Zhong F.N."/>
            <person name="Zhong W."/>
            <person name="Zhou X."/>
            <person name="Zhu S.C."/>
            <person name="Zhu X."/>
            <person name="Smith H.O."/>
            <person name="Gibbs R.A."/>
            <person name="Myers E.W."/>
            <person name="Rubin G.M."/>
            <person name="Venter J.C."/>
        </authorList>
    </citation>
    <scope>NUCLEOTIDE SEQUENCE [LARGE SCALE GENOMIC DNA]</scope>
    <source>
        <strain evidence="9">Berkeley</strain>
    </source>
</reference>
<reference evidence="9" key="2">
    <citation type="journal article" date="2002" name="Genome Biol.">
        <title>Annotation of the Drosophila melanogaster euchromatic genome: a systematic review.</title>
        <authorList>
            <person name="Misra S."/>
            <person name="Crosby M.A."/>
            <person name="Mungall C.J."/>
            <person name="Matthews B.B."/>
            <person name="Campbell K.S."/>
            <person name="Hradecky P."/>
            <person name="Huang Y."/>
            <person name="Kaminker J.S."/>
            <person name="Millburn G.H."/>
            <person name="Prochnik S.E."/>
            <person name="Smith C.D."/>
            <person name="Tupy J.L."/>
            <person name="Whitfield E.J."/>
            <person name="Bayraktaroglu L."/>
            <person name="Berman B.P."/>
            <person name="Bettencourt B.R."/>
            <person name="Celniker S.E."/>
            <person name="de Grey A.D.N.J."/>
            <person name="Drysdale R.A."/>
            <person name="Harris N.L."/>
            <person name="Richter J."/>
            <person name="Russo S."/>
            <person name="Schroeder A.J."/>
            <person name="Shu S.Q."/>
            <person name="Stapleton M."/>
            <person name="Yamada C."/>
            <person name="Ashburner M."/>
            <person name="Gelbart W.M."/>
            <person name="Rubin G.M."/>
            <person name="Lewis S.E."/>
        </authorList>
    </citation>
    <scope>GENOME REANNOTATION</scope>
    <source>
        <strain>Berkeley</strain>
    </source>
</reference>
<reference evidence="6" key="3">
    <citation type="journal article" date="2014" name="PLoS Genet.">
        <title>Three RNA binding proteins form a complex to promote differentiation of germline stem cell lineage in Drosophila.</title>
        <authorList>
            <person name="Chen D."/>
            <person name="Wu C."/>
            <person name="Zhao S."/>
            <person name="Geng Q."/>
            <person name="Gao Y."/>
            <person name="Li X."/>
            <person name="Zhang Y."/>
            <person name="Wang Z."/>
        </authorList>
    </citation>
    <scope>FUNCTION</scope>
    <scope>INTERACTION WITH BAM AND BGCN</scope>
    <scope>SUBCELLULAR LOCATION</scope>
    <scope>RRM DOMAIN</scope>
    <scope>DISRUPTION PHENOTYPE</scope>
</reference>
<reference evidence="6" key="4">
    <citation type="journal article" date="2017" name="J. Genet. Genomics">
        <title>Regulators of alternative polyadenylation operate at the transition from mitosis to meiosis.</title>
        <authorList>
            <person name="Shan L."/>
            <person name="Wu C."/>
            <person name="Chen D."/>
            <person name="Hou L."/>
            <person name="Li X."/>
            <person name="Wang L."/>
            <person name="Chu X."/>
            <person name="Hou Y."/>
            <person name="Wang Z."/>
        </authorList>
    </citation>
    <scope>FUNCTION</scope>
    <scope>INTERACTION WITH BAM; BGCN AND TWIN</scope>
</reference>
<reference evidence="6" key="5">
    <citation type="journal article" date="2024" name="Nat. Commun.">
        <title>Mettl1-dependent m7G tRNA modification is essential for maintaining spermatogenesis and fertility in Drosophila melanogaster.</title>
        <authorList>
            <person name="Kaneko S."/>
            <person name="Miyoshi K."/>
            <person name="Tomuro K."/>
            <person name="Terauchi M."/>
            <person name="Tanaka R."/>
            <person name="Kondo S."/>
            <person name="Tani N."/>
            <person name="Ishiguro K.I."/>
            <person name="Toyoda A."/>
            <person name="Kamikouchi A."/>
            <person name="Noguchi H."/>
            <person name="Iwasaki S."/>
            <person name="Saito K."/>
        </authorList>
    </citation>
    <scope>DISRUPTION PHENOTYPE</scope>
</reference>
<gene>
    <name evidence="5 8" type="primary">tut</name>
    <name evidence="7" type="synonym">anon-WO0118547.705</name>
    <name evidence="8" type="ORF">CG32364</name>
</gene>
<evidence type="ECO:0000255" key="1">
    <source>
        <dbReference type="PROSITE-ProRule" id="PRU00176"/>
    </source>
</evidence>
<evidence type="ECO:0000269" key="2">
    <source>
    </source>
</evidence>
<evidence type="ECO:0000269" key="3">
    <source>
    </source>
</evidence>
<evidence type="ECO:0000269" key="4">
    <source>
    </source>
</evidence>
<evidence type="ECO:0000303" key="5">
    <source>
    </source>
</evidence>
<evidence type="ECO:0000305" key="6"/>
<evidence type="ECO:0000312" key="7">
    <source>
        <dbReference type="EMBL" id="AAN12017.1"/>
    </source>
</evidence>
<evidence type="ECO:0000312" key="8">
    <source>
        <dbReference type="FlyBase" id="FBgn0052364"/>
    </source>
</evidence>
<evidence type="ECO:0000312" key="9">
    <source>
        <dbReference type="Proteomes" id="UP000000803"/>
    </source>
</evidence>